<name>URTF_STAAB</name>
<sequence length="395" mass="44891">MLDKNQLAKYKQNHLCEYEKIMSNNEKEALEEKIASLDLDFIAKLYNDLYINKKTIDDVSAVSEVKYDIKSQMSDDEIKRLEEQGLQAIKEGQFAVLLMAGGQGTRLGYKGPKGSFEIEGVSLFELQANQLKTLNHQSGHTIQWYIMISDINHEETLAYFEAHSYFGYDQEAIHFFKQDNIVALSEEGKLILNQQGRIMETPNGNGGVFKSLDKAGYLEEMSNNGVKYIFLNNIDNVLVKVLDPLFAGFTVEHDYDITSKTIQPKPGESVGRLVNVDCKDTVLEYSELDPEVANQFNNANIGIHAFKLGFILNAVNRELPYHLAIKNLKQLDENFGVIEQPTLKFELFYFDIFTYGTSFVTLQVPREEEFSPLKNKEGKDSVATATEDLRRMGLI</sequence>
<proteinExistence type="inferred from homology"/>
<keyword id="KW-0548">Nucleotidyltransferase</keyword>
<keyword id="KW-0808">Transferase</keyword>
<comment type="similarity">
    <text evidence="2">Belongs to the UDPGP type 1 family.</text>
</comment>
<gene>
    <name type="ordered locus">SAB2052c</name>
</gene>
<reference key="1">
    <citation type="journal article" date="2007" name="PLoS ONE">
        <title>Molecular correlates of host specialization in Staphylococcus aureus.</title>
        <authorList>
            <person name="Herron-Olson L."/>
            <person name="Fitzgerald J.R."/>
            <person name="Musser J.M."/>
            <person name="Kapur V."/>
        </authorList>
    </citation>
    <scope>NUCLEOTIDE SEQUENCE [LARGE SCALE GENOMIC DNA]</scope>
    <source>
        <strain>bovine RF122 / ET3-1</strain>
    </source>
</reference>
<dbReference type="EC" id="2.7.7.-"/>
<dbReference type="EMBL" id="AJ938182">
    <property type="protein sequence ID" value="CAI81741.1"/>
    <property type="molecule type" value="Genomic_DNA"/>
</dbReference>
<dbReference type="RefSeq" id="WP_000884747.1">
    <property type="nucleotide sequence ID" value="NC_007622.1"/>
</dbReference>
<dbReference type="SMR" id="Q2YYH4"/>
<dbReference type="KEGG" id="sab:SAB2052c"/>
<dbReference type="HOGENOM" id="CLU_025603_1_2_9"/>
<dbReference type="GO" id="GO:0070569">
    <property type="term" value="F:uridylyltransferase activity"/>
    <property type="evidence" value="ECO:0007669"/>
    <property type="project" value="InterPro"/>
</dbReference>
<dbReference type="CDD" id="cd04193">
    <property type="entry name" value="UDPGlcNAc_PPase"/>
    <property type="match status" value="1"/>
</dbReference>
<dbReference type="Gene3D" id="3.90.550.10">
    <property type="entry name" value="Spore Coat Polysaccharide Biosynthesis Protein SpsA, Chain A"/>
    <property type="match status" value="1"/>
</dbReference>
<dbReference type="InterPro" id="IPR029044">
    <property type="entry name" value="Nucleotide-diphossugar_trans"/>
</dbReference>
<dbReference type="InterPro" id="IPR039741">
    <property type="entry name" value="UDP-sugar_pyrophosphorylase"/>
</dbReference>
<dbReference type="InterPro" id="IPR002618">
    <property type="entry name" value="UDPGP_fam"/>
</dbReference>
<dbReference type="PANTHER" id="PTHR11952:SF2">
    <property type="entry name" value="LD24639P"/>
    <property type="match status" value="1"/>
</dbReference>
<dbReference type="PANTHER" id="PTHR11952">
    <property type="entry name" value="UDP- GLUCOSE PYROPHOSPHORYLASE"/>
    <property type="match status" value="1"/>
</dbReference>
<dbReference type="Pfam" id="PF01704">
    <property type="entry name" value="UDPGP"/>
    <property type="match status" value="1"/>
</dbReference>
<dbReference type="SUPFAM" id="SSF53448">
    <property type="entry name" value="Nucleotide-diphospho-sugar transferases"/>
    <property type="match status" value="1"/>
</dbReference>
<accession>Q2YYH4</accession>
<feature type="chain" id="PRO_0000271308" description="Probable uridylyltransferase SAB2052c">
    <location>
        <begin position="1"/>
        <end position="395"/>
    </location>
</feature>
<feature type="binding site" evidence="1">
    <location>
        <begin position="99"/>
        <end position="102"/>
    </location>
    <ligand>
        <name>UTP</name>
        <dbReference type="ChEBI" id="CHEBI:46398"/>
    </ligand>
</feature>
<feature type="binding site" evidence="1">
    <location>
        <position position="113"/>
    </location>
    <ligand>
        <name>UTP</name>
        <dbReference type="ChEBI" id="CHEBI:46398"/>
    </ligand>
</feature>
<feature type="binding site" evidence="1">
    <location>
        <position position="178"/>
    </location>
    <ligand>
        <name>UTP</name>
        <dbReference type="ChEBI" id="CHEBI:46398"/>
    </ligand>
</feature>
<feature type="binding site" evidence="1">
    <location>
        <position position="204"/>
    </location>
    <ligand>
        <name>UTP</name>
        <dbReference type="ChEBI" id="CHEBI:46398"/>
    </ligand>
</feature>
<feature type="binding site" evidence="1">
    <location>
        <position position="235"/>
    </location>
    <ligand>
        <name>UTP</name>
        <dbReference type="ChEBI" id="CHEBI:46398"/>
    </ligand>
</feature>
<feature type="binding site" evidence="1">
    <location>
        <position position="344"/>
    </location>
    <ligand>
        <name>UTP</name>
        <dbReference type="ChEBI" id="CHEBI:46398"/>
    </ligand>
</feature>
<organism>
    <name type="scientific">Staphylococcus aureus (strain bovine RF122 / ET3-1)</name>
    <dbReference type="NCBI Taxonomy" id="273036"/>
    <lineage>
        <taxon>Bacteria</taxon>
        <taxon>Bacillati</taxon>
        <taxon>Bacillota</taxon>
        <taxon>Bacilli</taxon>
        <taxon>Bacillales</taxon>
        <taxon>Staphylococcaceae</taxon>
        <taxon>Staphylococcus</taxon>
    </lineage>
</organism>
<protein>
    <recommendedName>
        <fullName>Probable uridylyltransferase SAB2052c</fullName>
        <ecNumber>2.7.7.-</ecNumber>
    </recommendedName>
</protein>
<evidence type="ECO:0000250" key="1">
    <source>
        <dbReference type="UniProtKB" id="Q9M9P3"/>
    </source>
</evidence>
<evidence type="ECO:0000305" key="2"/>